<name>ITPR1_BOVIN</name>
<evidence type="ECO:0000250" key="1">
    <source>
        <dbReference type="UniProtKB" id="P11881"/>
    </source>
</evidence>
<evidence type="ECO:0000250" key="2">
    <source>
        <dbReference type="UniProtKB" id="P29994"/>
    </source>
</evidence>
<evidence type="ECO:0000250" key="3">
    <source>
        <dbReference type="UniProtKB" id="Q14573"/>
    </source>
</evidence>
<evidence type="ECO:0000250" key="4">
    <source>
        <dbReference type="UniProtKB" id="Q14643"/>
    </source>
</evidence>
<evidence type="ECO:0000255" key="5"/>
<evidence type="ECO:0000255" key="6">
    <source>
        <dbReference type="PROSITE-ProRule" id="PRU00131"/>
    </source>
</evidence>
<evidence type="ECO:0000256" key="7">
    <source>
        <dbReference type="SAM" id="MobiDB-lite"/>
    </source>
</evidence>
<evidence type="ECO:0000269" key="8">
    <source>
    </source>
</evidence>
<evidence type="ECO:0000269" key="9">
    <source>
    </source>
</evidence>
<evidence type="ECO:0000303" key="10">
    <source>
    </source>
</evidence>
<evidence type="ECO:0000305" key="11"/>
<organism>
    <name type="scientific">Bos taurus</name>
    <name type="common">Bovine</name>
    <dbReference type="NCBI Taxonomy" id="9913"/>
    <lineage>
        <taxon>Eukaryota</taxon>
        <taxon>Metazoa</taxon>
        <taxon>Chordata</taxon>
        <taxon>Craniata</taxon>
        <taxon>Vertebrata</taxon>
        <taxon>Euteleostomi</taxon>
        <taxon>Mammalia</taxon>
        <taxon>Eutheria</taxon>
        <taxon>Laurasiatheria</taxon>
        <taxon>Artiodactyla</taxon>
        <taxon>Ruminantia</taxon>
        <taxon>Pecora</taxon>
        <taxon>Bovidae</taxon>
        <taxon>Bovinae</taxon>
        <taxon>Bos</taxon>
    </lineage>
</organism>
<comment type="function">
    <text evidence="1 2 4">Inositol 1,4,5-trisphosphate-gated calcium channel that, upon inositol 1,4,5-trisphosphate binding, mediates calcium release from the endoplasmic reticulum (ER) (By similarity). Undergoes conformational changes upon ligand binding, suggesting structural flexibility that allows the channel to switch from a closed state, capable of interacting with its ligands such as 1,4,5-trisphosphate and calcium, to an open state, capable of transferring calcium ions across the ER membrane (By similarity). Cytoplasmic calcium released from the ER triggers apoptosis by the activation of CAMK2 complex (By similarity). Part of a complex composed of HSPA9, ITPR1 and VDAC1 that regulates mitochondrial calcium-dependent apoptosis by facilitating calcium transport from the ER lumen to the mitochondria intermembrane space thus providing calcium for the downstream calcium channel MCU that directly releases it into mitochondria matrix (By similarity). Involved in the regulation of epithelial secretion of electrolytes and fluid through the interaction with AHCYL1 (By similarity). Regulates fertilization and egg activation by tuning the frequency and amplitude of calcium oscillations (By similarity).</text>
</comment>
<comment type="catalytic activity">
    <reaction evidence="4">
        <text>Ca(2+)(in) = Ca(2+)(out)</text>
        <dbReference type="Rhea" id="RHEA:29671"/>
        <dbReference type="ChEBI" id="CHEBI:29108"/>
    </reaction>
</comment>
<comment type="activity regulation">
    <text evidence="1 2 4">Inositol 1,4,5-trisphosphate-gated calcium channel activity is regulated by cytosolic calcium in a biphasic manner, with low concentrations causing activation and higher concentrations inhibiting channel opening, giving rise to calcium oscillations. ATP increases the open probability of ITPR1 by synergizing with the activating effect of these two primarily ligands, inositol 1,4,5-trisphosphate and calcium (By similarity). Inositol 1,4,5-trisphosphate-gated calcium channel activity is activated by zinc ions (By similarity). Inositol 1,4,5-trisphosphate-gated calcium channel activity is inhibited by CALM1 in a calcium-dependent manner (By similarity).</text>
</comment>
<comment type="subunit">
    <text evidence="1 2 4 8 9">Homotetramer. Homodimer (By similarity). Interacts with ERP44 in a pH-, redox state- and calcium-dependent manner which results in the inhibition the calcium channel activity. The strength of this interaction inversely correlates with calcium concentration (By similarity). Part of cGMP kinase signaling complex at least composed of ACTA2/alpha-actin, CNN1/calponin H1, PLN/phospholamban, PRKG1 and ITPR1 (PubMed:12480535). Interacts with IRAG1 (By similarity). Interacts with CABP1 (via N-terminus) (By similarity). Interacts with TESPA1. Interacts (when not phosphorylated) with AHCYL1 (when phosphorylated); the interaction suppresses inositol 1,4,5-trisphosphate binding to ITPR1 and is increased in the presence of BCL2L10. Interacts with AHCYL2 (with lower affinity than with AHCYL1). Interacts with BCL2L10; the interaction is increased in the presence of AHCLY1. Interacts with BOK (via BH4 domain); protects ITPR1 from proteolysis by CASP3 during apoptosis (By similarity). Interacts with TRPC4 (By similarity). Interacts with CHGA and CHGB (PubMed:11584008). Interacts with CALM1; this interaction inhibits inositol 1,4,5 trisphosphate binding in both the presence and absence of calcium and inositol 1,4,5 trisphosphate-induced calcium release in the presence of calcium. Interacts with the complex composed by ERLIN1, ERLIN2 and RNF170 through ERLIN2; this interaction triggers its ubiquitin-proteasomal degradation (By similarity). Interacts with HSPA9; this interaction couples ITPR1 to VDAC1 (By similarity).</text>
</comment>
<comment type="subcellular location">
    <subcellularLocation>
        <location evidence="8">Endoplasmic reticulum membrane</location>
        <topology evidence="2 5">Multi-pass membrane protein</topology>
    </subcellularLocation>
    <subcellularLocation>
        <location evidence="8">Cytoplasmic vesicle</location>
        <location evidence="8">Secretory vesicle membrane</location>
        <topology evidence="2 5">Multi-pass membrane protein</topology>
    </subcellularLocation>
    <subcellularLocation>
        <location evidence="4">Cytoplasm</location>
        <location evidence="4">Perinuclear region</location>
    </subcellularLocation>
    <text evidence="2 8">Found in a complex with HSPA9 and VDAC1 at the endoplasmic reticulum-mitochondria contact sites.</text>
</comment>
<comment type="domain">
    <text evidence="2">The ITPR1 structure has a large solenoid CY assembly built around the central helical bundle made of the C-terminal domains from four ITPR1 subunits. The solenoid scaffold includes domains responsible for binding of ligands and regulatory proteins and is connected via an allosteric nexus at the cytosolic-membrane interface to the transmembrane channel assembly. Six transmembrane helices from each subunit form the central ion-conduction pore.</text>
</comment>
<comment type="PTM">
    <text evidence="2">Polyubiquitinated. Polyubiquitination targets ITPR1 for proteasomal degradation (By similarity). Approximately 40% of the ITPR1-associated ubiquitin is monoubiquitin, and polyubiquitins are both 'Lys-48'- and 'Lys-63'-linked (By similarity).</text>
</comment>
<comment type="PTM">
    <text evidence="1 2">Phosphorylated by cAMP kinase (PKA) enhances calcium release (By similarity). Phosphorylation by PKA increases the interaction with inositol 1,4,5-trisphosphate and decreases the interaction with AHCYL1 (By similarity).</text>
</comment>
<comment type="PTM">
    <text evidence="4">Phosphorylated on tyrosine residues.</text>
</comment>
<comment type="PTM">
    <text evidence="1">Palmitoylated by ZDHHC6 in immune cells, leading to regulation of ITPR1 stability and function.</text>
</comment>
<comment type="similarity">
    <text evidence="11">Belongs to the InsP3 receptor family.</text>
</comment>
<accession>Q9TU34</accession>
<accession>Q7M2U0</accession>
<reference key="1">
    <citation type="journal article" date="2001" name="J. Biol. Chem.">
        <title>Localization of three types of the inositol 1,4,5-trisphosphate receptor/Ca2+ channel in the secretory granules and coupling with the Ca2+ storage proteins chromogranins A and B.</title>
        <authorList>
            <person name="Yoo S.H."/>
            <person name="Oh Y.S."/>
            <person name="Kang M.K."/>
            <person name="Huh Y.H."/>
            <person name="So S.H."/>
            <person name="Park H.S."/>
            <person name="Park H.Y."/>
        </authorList>
    </citation>
    <scope>NUCLEOTIDE SEQUENCE [MRNA]</scope>
    <scope>SUBCELLULAR LOCATION</scope>
    <scope>INTERACTION WITH CHGA AND CHGB</scope>
    <source>
        <tissue>Adrenal medulla</tissue>
    </source>
</reference>
<reference key="2">
    <citation type="journal article" date="1990" name="J. Biol. Chem.">
        <title>Smooth muscle and brain inositol 1,4,5-trisphosphate receptors are structurally and functionally similar.</title>
        <authorList>
            <person name="Marks A.R."/>
            <person name="Tempst P."/>
            <person name="Chadwick C.C."/>
            <person name="Riviere L."/>
            <person name="Fleischer S."/>
            <person name="Nadal-Ginard B."/>
        </authorList>
    </citation>
    <scope>PROTEIN SEQUENCE OF 75-87; 149-167; 429-440; 833-843; 936-955; 1000-1012; 1130-1135; 1547-1554; 2071-2078 AND 2207-2217</scope>
</reference>
<reference key="3">
    <citation type="journal article" date="2000" name="Nature">
        <title>Regulation of intracellular calcium by a signalling complex of IRAG, IP3 receptor and cGMP kinase Ibeta.</title>
        <authorList>
            <person name="Schlossmann J."/>
            <person name="Ammendola A."/>
            <person name="Ashman K."/>
            <person name="Zong X."/>
            <person name="Huber A."/>
            <person name="Neubauer G."/>
            <person name="Wang G.-X."/>
            <person name="Allescher H.-D."/>
            <person name="Korth M."/>
            <person name="Wilm M."/>
            <person name="Hofmann F."/>
            <person name="Ruth P."/>
        </authorList>
    </citation>
    <scope>INTERACTION WITH IRAG1</scope>
</reference>
<reference key="4">
    <citation type="journal article" date="2001" name="J. Biol. Chem.">
        <title>Molecular determinants of the interaction between the inositol 1,4,5-trisphosphate receptor-associated cGMP kinase substrate (IRAG) and cGMP kinase Ibeta.</title>
        <authorList>
            <person name="Ammendola A."/>
            <person name="Geiselhoeringer A."/>
            <person name="Hofmann F."/>
            <person name="Schlossmann J."/>
        </authorList>
    </citation>
    <scope>INTERACTION WITH IRAG1</scope>
</reference>
<reference key="5">
    <citation type="journal article" date="2003" name="Biochem. Biophys. Res. Commun.">
        <title>Association of phospholamban with a cGMP kinase signaling complex.</title>
        <authorList>
            <person name="Koller A."/>
            <person name="Schlossmann J."/>
            <person name="Ashman K."/>
            <person name="Uttenweiler-Joseph S."/>
            <person name="Ruth P."/>
            <person name="Hofmann F."/>
        </authorList>
    </citation>
    <scope>SUBUNIT</scope>
</reference>
<feature type="chain" id="PRO_0000153919" description="Inositol 1,4,5-trisphosphate-gated calcium channel ITPR1">
    <location>
        <begin position="1"/>
        <end position="2709"/>
    </location>
</feature>
<feature type="topological domain" description="Cytoplasmic" evidence="2 5">
    <location>
        <begin position="1"/>
        <end position="2233"/>
    </location>
</feature>
<feature type="transmembrane region" description="Helical" evidence="2 5">
    <location>
        <begin position="2234"/>
        <end position="2254"/>
    </location>
</feature>
<feature type="topological domain" description="Lumenal" evidence="2 5">
    <location>
        <begin position="2255"/>
        <end position="2266"/>
    </location>
</feature>
<feature type="transmembrane region" description="Helical" evidence="2 5">
    <location>
        <begin position="2267"/>
        <end position="2287"/>
    </location>
</feature>
<feature type="topological domain" description="Cytoplasmic" evidence="2 5">
    <location>
        <begin position="2288"/>
        <end position="2312"/>
    </location>
</feature>
<feature type="transmembrane region" description="Helical" evidence="2 5">
    <location>
        <begin position="2313"/>
        <end position="2333"/>
    </location>
</feature>
<feature type="topological domain" description="Lumenal" evidence="2 5">
    <location>
        <begin position="2334"/>
        <end position="2356"/>
    </location>
</feature>
<feature type="transmembrane region" description="Helical" evidence="2 5">
    <location>
        <begin position="2357"/>
        <end position="2377"/>
    </location>
</feature>
<feature type="topological domain" description="Cytoplasmic" evidence="2 5">
    <location>
        <begin position="2378"/>
        <end position="2399"/>
    </location>
</feature>
<feature type="transmembrane region" description="Helical" evidence="2 5">
    <location>
        <begin position="2400"/>
        <end position="2420"/>
    </location>
</feature>
<feature type="topological domain" description="Lumenal" evidence="2 5">
    <location>
        <begin position="2421"/>
        <end position="2528"/>
    </location>
</feature>
<feature type="transmembrane region" description="Helical" evidence="2 5">
    <location>
        <begin position="2529"/>
        <end position="2549"/>
    </location>
</feature>
<feature type="topological domain" description="Cytoplasmic" evidence="2 5">
    <location>
        <begin position="2550"/>
        <end position="2709"/>
    </location>
</feature>
<feature type="domain" description="MIR 1" evidence="6">
    <location>
        <begin position="112"/>
        <end position="166"/>
    </location>
</feature>
<feature type="domain" description="MIR 2" evidence="6">
    <location>
        <begin position="173"/>
        <end position="223"/>
    </location>
</feature>
<feature type="domain" description="MIR 3" evidence="6">
    <location>
        <begin position="231"/>
        <end position="287"/>
    </location>
</feature>
<feature type="domain" description="MIR 4" evidence="6">
    <location>
        <begin position="294"/>
        <end position="373"/>
    </location>
</feature>
<feature type="domain" description="MIR 5" evidence="6">
    <location>
        <begin position="379"/>
        <end position="435"/>
    </location>
</feature>
<feature type="region of interest" description="Disordered" evidence="7">
    <location>
        <begin position="1005"/>
        <end position="1026"/>
    </location>
</feature>
<feature type="region of interest" description="Disordered" evidence="7">
    <location>
        <begin position="1137"/>
        <end position="1169"/>
    </location>
</feature>
<feature type="region of interest" description="Disordered" evidence="7">
    <location>
        <begin position="1711"/>
        <end position="1747"/>
    </location>
</feature>
<feature type="region of interest" description="Disordered" evidence="7">
    <location>
        <begin position="1841"/>
        <end position="1866"/>
    </location>
</feature>
<feature type="region of interest" description="Disordered" evidence="7">
    <location>
        <begin position="1892"/>
        <end position="1912"/>
    </location>
</feature>
<feature type="region of interest" description="Interaction with ERP44" evidence="1">
    <location>
        <begin position="2423"/>
        <end position="2488"/>
    </location>
</feature>
<feature type="region of interest" description="Disordered" evidence="7">
    <location>
        <begin position="2682"/>
        <end position="2709"/>
    </location>
</feature>
<feature type="compositionally biased region" description="Low complexity" evidence="7">
    <location>
        <begin position="1005"/>
        <end position="1020"/>
    </location>
</feature>
<feature type="compositionally biased region" description="Basic and acidic residues" evidence="7">
    <location>
        <begin position="1149"/>
        <end position="1159"/>
    </location>
</feature>
<feature type="compositionally biased region" description="Polar residues" evidence="7">
    <location>
        <begin position="1160"/>
        <end position="1169"/>
    </location>
</feature>
<feature type="compositionally biased region" description="Low complexity" evidence="7">
    <location>
        <begin position="1718"/>
        <end position="1728"/>
    </location>
</feature>
<feature type="compositionally biased region" description="Gly residues" evidence="7">
    <location>
        <begin position="1730"/>
        <end position="1740"/>
    </location>
</feature>
<feature type="compositionally biased region" description="Basic and acidic residues" evidence="7">
    <location>
        <begin position="1842"/>
        <end position="1856"/>
    </location>
</feature>
<feature type="binding site" evidence="2">
    <location>
        <position position="265"/>
    </location>
    <ligand>
        <name>1D-myo-inositol 1,4,5-trisphosphate</name>
        <dbReference type="ChEBI" id="CHEBI:203600"/>
    </ligand>
</feature>
<feature type="binding site" evidence="2">
    <location>
        <position position="267"/>
    </location>
    <ligand>
        <name>1D-myo-inositol 1,4,5-trisphosphate</name>
        <dbReference type="ChEBI" id="CHEBI:203600"/>
    </ligand>
</feature>
<feature type="binding site" evidence="2">
    <location>
        <position position="268"/>
    </location>
    <ligand>
        <name>1D-myo-inositol 1,4,5-trisphosphate</name>
        <dbReference type="ChEBI" id="CHEBI:203600"/>
    </ligand>
</feature>
<feature type="binding site" evidence="2">
    <location>
        <position position="269"/>
    </location>
    <ligand>
        <name>1D-myo-inositol 1,4,5-trisphosphate</name>
        <dbReference type="ChEBI" id="CHEBI:203600"/>
    </ligand>
</feature>
<feature type="binding site" evidence="1">
    <location>
        <position position="508"/>
    </location>
    <ligand>
        <name>1D-myo-inositol 1,4,5-trisphosphate</name>
        <dbReference type="ChEBI" id="CHEBI:203600"/>
    </ligand>
</feature>
<feature type="binding site" evidence="2">
    <location>
        <position position="511"/>
    </location>
    <ligand>
        <name>1D-myo-inositol 1,4,5-trisphosphate</name>
        <dbReference type="ChEBI" id="CHEBI:203600"/>
    </ligand>
</feature>
<feature type="binding site" evidence="2">
    <location>
        <position position="567"/>
    </location>
    <ligand>
        <name>1D-myo-inositol 1,4,5-trisphosphate</name>
        <dbReference type="ChEBI" id="CHEBI:203600"/>
    </ligand>
</feature>
<feature type="binding site" evidence="2">
    <location>
        <position position="568"/>
    </location>
    <ligand>
        <name>1D-myo-inositol 1,4,5-trisphosphate</name>
        <dbReference type="ChEBI" id="CHEBI:203600"/>
    </ligand>
</feature>
<feature type="binding site" evidence="3">
    <location>
        <position position="747"/>
    </location>
    <ligand>
        <name>Ca(2+)</name>
        <dbReference type="ChEBI" id="CHEBI:29108"/>
        <label>1</label>
        <note>low affinity</note>
    </ligand>
</feature>
<feature type="binding site" evidence="3">
    <location>
        <position position="1127"/>
    </location>
    <ligand>
        <name>Ca(2+)</name>
        <dbReference type="ChEBI" id="CHEBI:29108"/>
        <label>1</label>
        <note>low affinity</note>
    </ligand>
</feature>
<feature type="binding site" evidence="3">
    <location>
        <position position="1130"/>
    </location>
    <ligand>
        <name>Ca(2+)</name>
        <dbReference type="ChEBI" id="CHEBI:29108"/>
        <label>1</label>
        <note>low affinity</note>
    </ligand>
</feature>
<feature type="binding site" evidence="3">
    <location>
        <position position="1937"/>
    </location>
    <ligand>
        <name>Ca(2+)</name>
        <dbReference type="ChEBI" id="CHEBI:29108"/>
        <label>2</label>
        <note>high affinity</note>
    </ligand>
</feature>
<feature type="binding site" evidence="3">
    <location>
        <position position="2001"/>
    </location>
    <ligand>
        <name>Ca(2+)</name>
        <dbReference type="ChEBI" id="CHEBI:29108"/>
        <label>2</label>
        <note>high affinity</note>
    </ligand>
</feature>
<feature type="binding site" evidence="2">
    <location>
        <position position="2180"/>
    </location>
    <ligand>
        <name>ATP</name>
        <dbReference type="ChEBI" id="CHEBI:30616"/>
    </ligand>
</feature>
<feature type="binding site" evidence="2">
    <location>
        <position position="2183"/>
    </location>
    <ligand>
        <name>ATP</name>
        <dbReference type="ChEBI" id="CHEBI:30616"/>
    </ligand>
</feature>
<feature type="binding site" evidence="2">
    <location>
        <position position="2570"/>
    </location>
    <ligand>
        <name>ATP</name>
        <dbReference type="ChEBI" id="CHEBI:30616"/>
    </ligand>
</feature>
<feature type="binding site" evidence="2">
    <location>
        <position position="2570"/>
    </location>
    <ligand>
        <name>Zn(2+)</name>
        <dbReference type="ChEBI" id="CHEBI:29105"/>
    </ligand>
</feature>
<feature type="binding site" evidence="2">
    <location>
        <position position="2571"/>
    </location>
    <ligand>
        <name>ATP</name>
        <dbReference type="ChEBI" id="CHEBI:30616"/>
    </ligand>
</feature>
<feature type="binding site" evidence="2">
    <location>
        <position position="2573"/>
    </location>
    <ligand>
        <name>Zn(2+)</name>
        <dbReference type="ChEBI" id="CHEBI:29105"/>
    </ligand>
</feature>
<feature type="binding site" evidence="2">
    <location>
        <position position="2590"/>
    </location>
    <ligand>
        <name>Zn(2+)</name>
        <dbReference type="ChEBI" id="CHEBI:29105"/>
    </ligand>
</feature>
<feature type="binding site" evidence="2">
    <location>
        <position position="2595"/>
    </location>
    <ligand>
        <name>ATP</name>
        <dbReference type="ChEBI" id="CHEBI:30616"/>
    </ligand>
</feature>
<feature type="binding site" evidence="2">
    <location>
        <position position="2595"/>
    </location>
    <ligand>
        <name>Zn(2+)</name>
        <dbReference type="ChEBI" id="CHEBI:29105"/>
    </ligand>
</feature>
<feature type="binding site" evidence="2">
    <location>
        <position position="2597"/>
    </location>
    <ligand>
        <name>ATP</name>
        <dbReference type="ChEBI" id="CHEBI:30616"/>
    </ligand>
</feature>
<feature type="binding site" evidence="3">
    <location>
        <position position="2613"/>
    </location>
    <ligand>
        <name>Ca(2+)</name>
        <dbReference type="ChEBI" id="CHEBI:29108"/>
        <label>2</label>
        <note>high affinity</note>
    </ligand>
</feature>
<feature type="modified residue" description="Phosphoserine" evidence="4">
    <location>
        <position position="1588"/>
    </location>
</feature>
<feature type="modified residue" description="Phosphoserine; by PKA" evidence="2">
    <location>
        <position position="1715"/>
    </location>
</feature>
<feature type="lipid moiety-binding region" description="S-palmitoyl cysteine" evidence="1">
    <location>
        <position position="56"/>
    </location>
</feature>
<feature type="lipid moiety-binding region" description="S-palmitoyl cysteine" evidence="1">
    <location>
        <position position="849"/>
    </location>
</feature>
<feature type="disulfide bond" evidence="2">
    <location>
        <begin position="2487"/>
        <end position="2493"/>
    </location>
</feature>
<feature type="cross-link" description="Glycyl lysine isopeptide (Lys-Gly) (interchain with G-Cter in ubiquitin)" evidence="2">
    <location>
        <position position="916"/>
    </location>
</feature>
<feature type="cross-link" description="Glycyl lysine isopeptide (Lys-Gly) (interchain with G-Cter in ubiquitin)" evidence="2">
    <location>
        <position position="962"/>
    </location>
</feature>
<feature type="cross-link" description="Glycyl lysine isopeptide (Lys-Gly) (interchain with G-Cter in ubiquitin)" evidence="2">
    <location>
        <position position="1571"/>
    </location>
</feature>
<feature type="cross-link" description="Glycyl lysine isopeptide (Lys-Gly) (interchain with G-Cter in ubiquitin)" evidence="2">
    <location>
        <position position="1731"/>
    </location>
</feature>
<feature type="cross-link" description="Glycyl lysine isopeptide (Lys-Gly) (interchain with G-Cter in ubiquitin)" evidence="2">
    <location>
        <position position="1844"/>
    </location>
</feature>
<feature type="cross-link" description="Glycyl lysine isopeptide (Lys-Gly) (interchain with G-Cter in ubiquitin)" evidence="2">
    <location>
        <position position="1845"/>
    </location>
</feature>
<feature type="cross-link" description="Glycyl lysine isopeptide (Lys-Gly) (interchain with G-Cter in ubiquitin)" evidence="2">
    <location>
        <position position="1846"/>
    </location>
</feature>
<feature type="cross-link" description="Glycyl lysine isopeptide (Lys-Gly) (interchain with G-Cter in ubiquitin)" evidence="2">
    <location>
        <position position="1861"/>
    </location>
</feature>
<feature type="cross-link" description="Glycyl lysine isopeptide (Lys-Gly) (interchain with G-Cter in ubiquitin)" evidence="2">
    <location>
        <position position="1884"/>
    </location>
</feature>
<feature type="cross-link" description="Glycyl lysine isopeptide (Lys-Gly) (interchain with G-Cter in ubiquitin)" evidence="2">
    <location>
        <position position="2078"/>
    </location>
</feature>
<feature type="cross-link" description="Glycyl lysine isopeptide (Lys-Gly) (interchain with G-Cter in ubiquitin)" evidence="2">
    <location>
        <position position="2217"/>
    </location>
</feature>
<proteinExistence type="evidence at protein level"/>
<sequence>MSDKMSSFLHIGDICSLYAEGSTNGFISTLGLVDDRCVVQPETGDLNNPPKKFRDCLFKLCPMNRYSAQKQFWKAAKPGANSTTDAVLLNKLHHAADLEKKQNETENRKLLGTVIQYGNVIQLLHLKSNKYLTVNKRLPALLEKNAMRVTLDEAGNEGSWFYIQPFYKLRSIGDSVVIGDKVVLNPVNAGQPLHASSHQLVDNPGCNEVNSVNCNTSWKIVLFMKWSDNKDDILKGGDVVRLFHAEQEKFLTCDEHRKKQHVFLRTTGRQSATSATSSKALWEVEVVQHDPCRGGAGYWNSLFRFKHLATGHYLAAEVDPDFEEECLEFQPSVDPDQDASRSRLRNAQEKMVYSLVSVPEGNDISSIFELDPTTLRGGDSLVPRNSYVRLRHLCTNTWVHSTNIPIDKEEEKPVMLKIGTSPVKEDKEAFAIVPVSPAEVRDLDFANDASKVLGSIAGKLEKGTITQNERRSVTKLLEDLVYFVTGGTNSGQDVLEVVFSKPNRERQKLMREQNILKQIFKLLQAPFTDCGDGPMLRLEELGDQRHAPFRHICRLCYRVLRHSQQDYRKNQEYIAKQFGFMQKQIGYDVLAEDTITALLHNNRKLLEKHITAAEIDTFVSLVRKNREPRFLDYLSDLCVSMNKSIPVTQELICKAVLNPTNADILIETKLVLSRFEFEGVSTGENALEAGEDEEEVWVFWRDSNKEVRSKSVRELAQDAKEGQKEDRDVLGYYRYQLNLFARMCLDRQYLAINEISGQLDVDLILRCMSDENLPSDLRASFCRLMLHMHVDRDPQEQVTPVKYARLWSEIPSEIAIDDYDSSGTSKDEIKERFAQTMEFVEEYLRDVVCQRFPFSDKEKNKLTFEVVNLARNLIYFGFYNFSDLLRLTKILLAILDCVHVTTIFPISKMAKGEENKGSNVMRSIHGVGELMTQVVLRGGGFLPMTPTATAPEGNVKQAEPEKEDIMVMDTKLKIIEILQFILNVRLDYRISCLLCIFKREFDESNSQTSETSSGNSSQEGPSNVPGALDFEHIEEQAEGIFGGSEETTPLDLDDHGGRTFLRVLLHLTMHDYPPLVSGALQLLFRHFSQRQEVLQAFKQVQLLVTSQDVDNYKQIKQDLDQLRSIVEKSELWVYKGQGPDEAMDGASGENEHKKTEEGNNKSQQHESTSSYNYRVVKEILIRLSKLCVQESASVRKSRKQQQRLLRNMGAHAVVLELLQIPYEKAEDTMMQEIMRLAHEFLQNFCAGNHPNQALLHKHINLFLNPGILEAVTMQHIFMNNFQLCSEINERVVQHFVHCIETHGRNVQYIKFLQTIVKAEGKFIKKCQDMVMAELVNSGEDVLVFYNDRASFQTLIQMMRSERDRMDENSPLMYHIHLVELLAVCTEGKNVYTEIKCNSLLPLDDIVRVVTHEDCIPEVKIAYINFLNHCYVDPEVEMKEIYTSNHMWKLFENFLVDICRACNNTSDRKHADSILEKYVTEIVMSIVTTFFSSPFSDQSTTLQTRQPVFVQLLQGVFRVYHCNWLMPSQKASVESCIRVLSDVAKSRAIAIPVDLDSQVNNLFLKSHNLVQKTAMNWRLTARNAARRDSVLPVSRDYRNIIERLQDIVSALEDRLRPLVQAELSVLVDVLHRPELLFPENTDARRKCESGGFICKLIKHTKQLLEENEEKLCIKVLQTLREMMTKDRGYGEKGEALRQILVNRYYGNIRPSGRRESLTSFGNGPLSPGGPSKPGGGGGGSGSSPMSRGEMSLAEVQCHLDKEGASNLVIDLIMNASSDRVFHESILLAIALLEGGNTTIQHSFFCRLTEDKKSEKFFKVFYDRMKVAQQEIKATVTVNTSDLGNKKKDDEVDRDAPSRKKAKEPATQITEEVRDQLLEASAATRKAFTTFRREADPDDHYQSGEGAQAAADKSKDDLEMSAVITIMQPILRFLQLLCENHNRDLQNFLRCQNNKTNYNLVCETLQFLDCICGSTTGGLGLLGLYINEKNVALINQTLESLTEYCQGPCHENQNCIATHESNGIDIITALILNDINPLGKKRMDLVLELKNNASKLLLAIMESRHDSENAERILYNMRPKELVEVIKKAYMQGEVEFEDGENGEDGAASPRNVGHNIYILAHQLARHNKELQTMLKPGGQVDGDETLDFYAQPTGPNEIVRLDRTMEQIVFPVPSICEFLTKESKLRIYYTTERDEQGSKINDFFLRSEDLFNEMNWQKKLRAQPVLYWCARNMSFWSSISFNLAVLMNLLVAFFYPFKGVRGGTLEPHWSGLLWTAMLISLAIVIALPKPHGIRALIASTILRLIFSVGLQPTLFLLGAFNVCNKIIFLMSFVGNCGTFTRGYRAMVLDVEFLYHLLXLLICAMGLFVHEFFYSLLLFDLVYREETLLNVIKSVTRNGRSIILMAVLALILVYLFSIVGYLFFKDDFILEVDRLPNETSLPEASESLASEFLYSDVCRVETGENCSSPAPKEELVPAEETEQDKEHTCETLLMCIVTVLSHGLRSGGGVGDVLRKPSKEEPLFAARVIYDLLFFFMVIIIVLNLIFGVIIDTFADLRSEKQKKEEILKTTCFICGLERDKFDNKTVTFEEHIKEEHNMWHYLCFIVLVKVKDSTEYTGPESYVAEMIKERNLDWFPRMRAMSLVSSDSEGEQNELRNLQEKLESTMKLVTNLSGLLSELKDQMTDQRKQKQRMGLLGHPPHINVNPQQPA</sequence>
<protein>
    <recommendedName>
        <fullName evidence="11">Inositol 1,4,5-trisphosphate-gated calcium channel ITPR1</fullName>
    </recommendedName>
    <alternativeName>
        <fullName>IP3 receptor isoform 1</fullName>
        <shortName>IP3R 1</shortName>
        <shortName evidence="4">InsP3R1</shortName>
    </alternativeName>
    <alternativeName>
        <fullName evidence="10">Inositol 1,4,5-trisphosphate receptor type 1</fullName>
    </alternativeName>
    <alternativeName>
        <fullName evidence="4">Type 1 inositol 1,4,5-trisphosphate receptor</fullName>
        <shortName>Type 1 InsP3 receptor</shortName>
    </alternativeName>
</protein>
<dbReference type="EMBL" id="AF157625">
    <property type="protein sequence ID" value="AAF00613.1"/>
    <property type="molecule type" value="mRNA"/>
</dbReference>
<dbReference type="PIR" id="A38318">
    <property type="entry name" value="A38318"/>
</dbReference>
<dbReference type="RefSeq" id="NP_777266.1">
    <property type="nucleotide sequence ID" value="NM_174841.2"/>
</dbReference>
<dbReference type="CORUM" id="Q9TU34"/>
<dbReference type="FunCoup" id="Q9TU34">
    <property type="interactions" value="1179"/>
</dbReference>
<dbReference type="STRING" id="9913.ENSBTAP00000047903"/>
<dbReference type="PaxDb" id="9913-ENSBTAP00000047903"/>
<dbReference type="KEGG" id="bta:317697"/>
<dbReference type="CTD" id="3708"/>
<dbReference type="eggNOG" id="KOG3533">
    <property type="taxonomic scope" value="Eukaryota"/>
</dbReference>
<dbReference type="InParanoid" id="Q9TU34"/>
<dbReference type="OrthoDB" id="76898at2759"/>
<dbReference type="Proteomes" id="UP000009136">
    <property type="component" value="Unplaced"/>
</dbReference>
<dbReference type="GO" id="GO:0030424">
    <property type="term" value="C:axon"/>
    <property type="evidence" value="ECO:0000314"/>
    <property type="project" value="SynGO-UCL"/>
</dbReference>
<dbReference type="GO" id="GO:0005789">
    <property type="term" value="C:endoplasmic reticulum membrane"/>
    <property type="evidence" value="ECO:0000314"/>
    <property type="project" value="SynGO-UCL"/>
</dbReference>
<dbReference type="GO" id="GO:0048471">
    <property type="term" value="C:perinuclear region of cytoplasm"/>
    <property type="evidence" value="ECO:0007669"/>
    <property type="project" value="UniProtKB-SubCell"/>
</dbReference>
<dbReference type="GO" id="GO:0005886">
    <property type="term" value="C:plasma membrane"/>
    <property type="evidence" value="ECO:0000318"/>
    <property type="project" value="GO_Central"/>
</dbReference>
<dbReference type="GO" id="GO:0098793">
    <property type="term" value="C:presynapse"/>
    <property type="evidence" value="ECO:0000314"/>
    <property type="project" value="SynGO-UCL"/>
</dbReference>
<dbReference type="GO" id="GO:0005791">
    <property type="term" value="C:rough endoplasmic reticulum"/>
    <property type="evidence" value="ECO:0000314"/>
    <property type="project" value="CACAO"/>
</dbReference>
<dbReference type="GO" id="GO:0016529">
    <property type="term" value="C:sarcoplasmic reticulum"/>
    <property type="evidence" value="ECO:0000318"/>
    <property type="project" value="GO_Central"/>
</dbReference>
<dbReference type="GO" id="GO:0030141">
    <property type="term" value="C:secretory granule"/>
    <property type="evidence" value="ECO:0000314"/>
    <property type="project" value="CACAO"/>
</dbReference>
<dbReference type="GO" id="GO:0030667">
    <property type="term" value="C:secretory granule membrane"/>
    <property type="evidence" value="ECO:0000318"/>
    <property type="project" value="GO_Central"/>
</dbReference>
<dbReference type="GO" id="GO:0030658">
    <property type="term" value="C:transport vesicle membrane"/>
    <property type="evidence" value="ECO:0007669"/>
    <property type="project" value="UniProtKB-SubCell"/>
</dbReference>
<dbReference type="GO" id="GO:0005524">
    <property type="term" value="F:ATP binding"/>
    <property type="evidence" value="ECO:0007669"/>
    <property type="project" value="UniProtKB-KW"/>
</dbReference>
<dbReference type="GO" id="GO:0005509">
    <property type="term" value="F:calcium ion binding"/>
    <property type="evidence" value="ECO:0000318"/>
    <property type="project" value="GO_Central"/>
</dbReference>
<dbReference type="GO" id="GO:0070679">
    <property type="term" value="F:inositol 1,4,5 trisphosphate binding"/>
    <property type="evidence" value="ECO:0000250"/>
    <property type="project" value="UniProtKB"/>
</dbReference>
<dbReference type="GO" id="GO:0005220">
    <property type="term" value="F:inositol 1,4,5-trisphosphate-gated calcium channel activity"/>
    <property type="evidence" value="ECO:0000250"/>
    <property type="project" value="UniProtKB"/>
</dbReference>
<dbReference type="GO" id="GO:0015278">
    <property type="term" value="F:intracellularly gated calcium channel activity"/>
    <property type="evidence" value="ECO:0000250"/>
    <property type="project" value="UniProtKB"/>
</dbReference>
<dbReference type="GO" id="GO:0035091">
    <property type="term" value="F:phosphatidylinositol binding"/>
    <property type="evidence" value="ECO:0000250"/>
    <property type="project" value="UniProtKB"/>
</dbReference>
<dbReference type="GO" id="GO:0036444">
    <property type="term" value="P:calcium import into the mitochondrion"/>
    <property type="evidence" value="ECO:0000250"/>
    <property type="project" value="UniProtKB"/>
</dbReference>
<dbReference type="GO" id="GO:0070059">
    <property type="term" value="P:intrinsic apoptotic signaling pathway in response to endoplasmic reticulum stress"/>
    <property type="evidence" value="ECO:0000250"/>
    <property type="project" value="UniProtKB"/>
</dbReference>
<dbReference type="GO" id="GO:0051289">
    <property type="term" value="P:protein homotetramerization"/>
    <property type="evidence" value="ECO:0000250"/>
    <property type="project" value="UniProtKB"/>
</dbReference>
<dbReference type="GO" id="GO:0051480">
    <property type="term" value="P:regulation of cytosolic calcium ion concentration"/>
    <property type="evidence" value="ECO:0000250"/>
    <property type="project" value="UniProtKB"/>
</dbReference>
<dbReference type="GO" id="GO:0051209">
    <property type="term" value="P:release of sequestered calcium ion into cytosol"/>
    <property type="evidence" value="ECO:0000250"/>
    <property type="project" value="UniProtKB"/>
</dbReference>
<dbReference type="GO" id="GO:1903514">
    <property type="term" value="P:release of sequestered calcium ion into cytosol by endoplasmic reticulum"/>
    <property type="evidence" value="ECO:0000250"/>
    <property type="project" value="UniProtKB"/>
</dbReference>
<dbReference type="GO" id="GO:0007338">
    <property type="term" value="P:single fertilization"/>
    <property type="evidence" value="ECO:0000250"/>
    <property type="project" value="UniProtKB"/>
</dbReference>
<dbReference type="CDD" id="cd23287">
    <property type="entry name" value="beta-trefoil_MIR_ITPR1"/>
    <property type="match status" value="1"/>
</dbReference>
<dbReference type="FunFam" id="2.80.10.50:FF:000002">
    <property type="entry name" value="Inositol 1,4,5-trisphosphate receptor type 2"/>
    <property type="match status" value="1"/>
</dbReference>
<dbReference type="FunFam" id="1.25.10.30:FF:000001">
    <property type="entry name" value="Inositol 1,4,5-trisphosphate receptor, type 2"/>
    <property type="match status" value="1"/>
</dbReference>
<dbReference type="Gene3D" id="1.10.287.70">
    <property type="match status" value="1"/>
</dbReference>
<dbReference type="Gene3D" id="2.80.10.50">
    <property type="match status" value="2"/>
</dbReference>
<dbReference type="Gene3D" id="1.25.10.30">
    <property type="entry name" value="IP3 receptor type 1 binding core, RIH domain"/>
    <property type="match status" value="1"/>
</dbReference>
<dbReference type="InterPro" id="IPR016024">
    <property type="entry name" value="ARM-type_fold"/>
</dbReference>
<dbReference type="InterPro" id="IPR014821">
    <property type="entry name" value="Ins145_P3_rcpt"/>
</dbReference>
<dbReference type="InterPro" id="IPR000493">
    <property type="entry name" value="InsP3_rcpt"/>
</dbReference>
<dbReference type="InterPro" id="IPR005821">
    <property type="entry name" value="Ion_trans_dom"/>
</dbReference>
<dbReference type="InterPro" id="IPR036300">
    <property type="entry name" value="MIR_dom_sf"/>
</dbReference>
<dbReference type="InterPro" id="IPR016093">
    <property type="entry name" value="MIR_motif"/>
</dbReference>
<dbReference type="InterPro" id="IPR013662">
    <property type="entry name" value="RIH_assoc-dom"/>
</dbReference>
<dbReference type="InterPro" id="IPR000699">
    <property type="entry name" value="RIH_dom"/>
</dbReference>
<dbReference type="InterPro" id="IPR015925">
    <property type="entry name" value="Ryanodine_IP3_receptor"/>
</dbReference>
<dbReference type="InterPro" id="IPR035910">
    <property type="entry name" value="RyR/IP3R_RIH_dom_sf"/>
</dbReference>
<dbReference type="PANTHER" id="PTHR45816:SF2">
    <property type="entry name" value="INOSITOL 1,4,5-TRISPHOSPHATE RECEPTOR"/>
    <property type="match status" value="1"/>
</dbReference>
<dbReference type="PANTHER" id="PTHR45816">
    <property type="entry name" value="MIR DOMAIN-CONTAINING PROTEIN"/>
    <property type="match status" value="1"/>
</dbReference>
<dbReference type="Pfam" id="PF08709">
    <property type="entry name" value="Ins145_P3_rec"/>
    <property type="match status" value="1"/>
</dbReference>
<dbReference type="Pfam" id="PF00520">
    <property type="entry name" value="Ion_trans"/>
    <property type="match status" value="1"/>
</dbReference>
<dbReference type="Pfam" id="PF02815">
    <property type="entry name" value="MIR"/>
    <property type="match status" value="1"/>
</dbReference>
<dbReference type="Pfam" id="PF08454">
    <property type="entry name" value="RIH_assoc"/>
    <property type="match status" value="1"/>
</dbReference>
<dbReference type="Pfam" id="PF01365">
    <property type="entry name" value="RYDR_ITPR"/>
    <property type="match status" value="2"/>
</dbReference>
<dbReference type="PRINTS" id="PR00779">
    <property type="entry name" value="INSP3RECEPTR"/>
</dbReference>
<dbReference type="SMART" id="SM00472">
    <property type="entry name" value="MIR"/>
    <property type="match status" value="4"/>
</dbReference>
<dbReference type="SUPFAM" id="SSF48371">
    <property type="entry name" value="ARM repeat"/>
    <property type="match status" value="1"/>
</dbReference>
<dbReference type="SUPFAM" id="SSF100909">
    <property type="entry name" value="IP3 receptor type 1 binding core, domain 2"/>
    <property type="match status" value="2"/>
</dbReference>
<dbReference type="SUPFAM" id="SSF82109">
    <property type="entry name" value="MIR domain"/>
    <property type="match status" value="2"/>
</dbReference>
<dbReference type="PROSITE" id="PS50919">
    <property type="entry name" value="MIR"/>
    <property type="match status" value="5"/>
</dbReference>
<keyword id="KW-0053">Apoptosis</keyword>
<keyword id="KW-0067">ATP-binding</keyword>
<keyword id="KW-0106">Calcium</keyword>
<keyword id="KW-0107">Calcium channel</keyword>
<keyword id="KW-0109">Calcium transport</keyword>
<keyword id="KW-0963">Cytoplasm</keyword>
<keyword id="KW-0968">Cytoplasmic vesicle</keyword>
<keyword id="KW-0903">Direct protein sequencing</keyword>
<keyword id="KW-1015">Disulfide bond</keyword>
<keyword id="KW-0256">Endoplasmic reticulum</keyword>
<keyword id="KW-0407">Ion channel</keyword>
<keyword id="KW-0406">Ion transport</keyword>
<keyword id="KW-1017">Isopeptide bond</keyword>
<keyword id="KW-1071">Ligand-gated ion channel</keyword>
<keyword id="KW-0449">Lipoprotein</keyword>
<keyword id="KW-0472">Membrane</keyword>
<keyword id="KW-0479">Metal-binding</keyword>
<keyword id="KW-0547">Nucleotide-binding</keyword>
<keyword id="KW-0564">Palmitate</keyword>
<keyword id="KW-0597">Phosphoprotein</keyword>
<keyword id="KW-0675">Receptor</keyword>
<keyword id="KW-1185">Reference proteome</keyword>
<keyword id="KW-0677">Repeat</keyword>
<keyword id="KW-0812">Transmembrane</keyword>
<keyword id="KW-1133">Transmembrane helix</keyword>
<keyword id="KW-0813">Transport</keyword>
<keyword id="KW-0832">Ubl conjugation</keyword>
<keyword id="KW-0862">Zinc</keyword>
<gene>
    <name evidence="4" type="primary">ITPR1</name>
</gene>